<evidence type="ECO:0000256" key="1">
    <source>
        <dbReference type="SAM" id="MobiDB-lite"/>
    </source>
</evidence>
<evidence type="ECO:0000269" key="2">
    <source>
    </source>
</evidence>
<evidence type="ECO:0000269" key="3">
    <source>
    </source>
</evidence>
<evidence type="ECO:0000269" key="4">
    <source>
    </source>
</evidence>
<evidence type="ECO:0000305" key="5"/>
<evidence type="ECO:0007829" key="6">
    <source>
        <dbReference type="PDB" id="2VOG"/>
    </source>
</evidence>
<feature type="chain" id="PRO_0000143112" description="Bcl-2-modifying factor">
    <location>
        <begin position="1"/>
        <end position="185"/>
    </location>
</feature>
<feature type="region of interest" description="Disordered" evidence="1">
    <location>
        <begin position="1"/>
        <end position="28"/>
    </location>
</feature>
<feature type="region of interest" description="Interaction with DLC2" evidence="2">
    <location>
        <begin position="67"/>
        <end position="75"/>
    </location>
</feature>
<feature type="short sequence motif" description="BH3">
    <location>
        <begin position="134"/>
        <end position="148"/>
    </location>
</feature>
<feature type="compositionally biased region" description="Acidic residues" evidence="1">
    <location>
        <begin position="8"/>
        <end position="21"/>
    </location>
</feature>
<feature type="mutagenesis site" description="Loss of interaction with DLC2." evidence="2">
    <original>D</original>
    <variation>A</variation>
    <location>
        <position position="67"/>
    </location>
</feature>
<feature type="mutagenesis site" description="Loss of interaction with DLC2." evidence="2">
    <original>K</original>
    <variation>A</variation>
    <location>
        <position position="68"/>
    </location>
</feature>
<feature type="mutagenesis site" description="Loss of interaction with DLC2." evidence="2">
    <original>A</original>
    <variation>P</variation>
    <location>
        <position position="69"/>
    </location>
</feature>
<feature type="mutagenesis site" description="Decrease in the interaction with BCL2 and BCL2L2.">
    <original>L</original>
    <variation>A</variation>
    <location>
        <position position="138"/>
    </location>
</feature>
<feature type="helix" evidence="6">
    <location>
        <begin position="130"/>
        <end position="149"/>
    </location>
</feature>
<organism>
    <name type="scientific">Mus musculus</name>
    <name type="common">Mouse</name>
    <dbReference type="NCBI Taxonomy" id="10090"/>
    <lineage>
        <taxon>Eukaryota</taxon>
        <taxon>Metazoa</taxon>
        <taxon>Chordata</taxon>
        <taxon>Craniata</taxon>
        <taxon>Vertebrata</taxon>
        <taxon>Euteleostomi</taxon>
        <taxon>Mammalia</taxon>
        <taxon>Eutheria</taxon>
        <taxon>Euarchontoglires</taxon>
        <taxon>Glires</taxon>
        <taxon>Rodentia</taxon>
        <taxon>Myomorpha</taxon>
        <taxon>Muroidea</taxon>
        <taxon>Muridae</taxon>
        <taxon>Murinae</taxon>
        <taxon>Mus</taxon>
        <taxon>Mus</taxon>
    </lineage>
</organism>
<proteinExistence type="evidence at protein level"/>
<reference key="1">
    <citation type="journal article" date="2001" name="Science">
        <title>Bmf: a proapoptotic BH3-only protein regulated by interaction with the myosin V actin motor complex, activated by anoikis.</title>
        <authorList>
            <person name="Puthalakath H."/>
            <person name="Villunger A."/>
            <person name="O'Reilly L.A."/>
            <person name="Beaumont J.G."/>
            <person name="Coultas L."/>
            <person name="Cheney R.E."/>
            <person name="Huang D.C.S."/>
            <person name="Strasser A."/>
        </authorList>
    </citation>
    <scope>NUCLEOTIDE SEQUENCE [MRNA]</scope>
    <scope>INTERACTION WITH MCL1; BCL2; BCL2L1; BCL2L2 AND DLC2</scope>
    <scope>MUTAGENESIS OF ASP-67; LYS-68 AND ALA-69</scope>
    <source>
        <strain>C57BL/6J</strain>
    </source>
</reference>
<reference key="2">
    <citation type="journal article" date="2005" name="Science">
        <title>The transcriptional landscape of the mammalian genome.</title>
        <authorList>
            <person name="Carninci P."/>
            <person name="Kasukawa T."/>
            <person name="Katayama S."/>
            <person name="Gough J."/>
            <person name="Frith M.C."/>
            <person name="Maeda N."/>
            <person name="Oyama R."/>
            <person name="Ravasi T."/>
            <person name="Lenhard B."/>
            <person name="Wells C."/>
            <person name="Kodzius R."/>
            <person name="Shimokawa K."/>
            <person name="Bajic V.B."/>
            <person name="Brenner S.E."/>
            <person name="Batalov S."/>
            <person name="Forrest A.R."/>
            <person name="Zavolan M."/>
            <person name="Davis M.J."/>
            <person name="Wilming L.G."/>
            <person name="Aidinis V."/>
            <person name="Allen J.E."/>
            <person name="Ambesi-Impiombato A."/>
            <person name="Apweiler R."/>
            <person name="Aturaliya R.N."/>
            <person name="Bailey T.L."/>
            <person name="Bansal M."/>
            <person name="Baxter L."/>
            <person name="Beisel K.W."/>
            <person name="Bersano T."/>
            <person name="Bono H."/>
            <person name="Chalk A.M."/>
            <person name="Chiu K.P."/>
            <person name="Choudhary V."/>
            <person name="Christoffels A."/>
            <person name="Clutterbuck D.R."/>
            <person name="Crowe M.L."/>
            <person name="Dalla E."/>
            <person name="Dalrymple B.P."/>
            <person name="de Bono B."/>
            <person name="Della Gatta G."/>
            <person name="di Bernardo D."/>
            <person name="Down T."/>
            <person name="Engstrom P."/>
            <person name="Fagiolini M."/>
            <person name="Faulkner G."/>
            <person name="Fletcher C.F."/>
            <person name="Fukushima T."/>
            <person name="Furuno M."/>
            <person name="Futaki S."/>
            <person name="Gariboldi M."/>
            <person name="Georgii-Hemming P."/>
            <person name="Gingeras T.R."/>
            <person name="Gojobori T."/>
            <person name="Green R.E."/>
            <person name="Gustincich S."/>
            <person name="Harbers M."/>
            <person name="Hayashi Y."/>
            <person name="Hensch T.K."/>
            <person name="Hirokawa N."/>
            <person name="Hill D."/>
            <person name="Huminiecki L."/>
            <person name="Iacono M."/>
            <person name="Ikeo K."/>
            <person name="Iwama A."/>
            <person name="Ishikawa T."/>
            <person name="Jakt M."/>
            <person name="Kanapin A."/>
            <person name="Katoh M."/>
            <person name="Kawasawa Y."/>
            <person name="Kelso J."/>
            <person name="Kitamura H."/>
            <person name="Kitano H."/>
            <person name="Kollias G."/>
            <person name="Krishnan S.P."/>
            <person name="Kruger A."/>
            <person name="Kummerfeld S.K."/>
            <person name="Kurochkin I.V."/>
            <person name="Lareau L.F."/>
            <person name="Lazarevic D."/>
            <person name="Lipovich L."/>
            <person name="Liu J."/>
            <person name="Liuni S."/>
            <person name="McWilliam S."/>
            <person name="Madan Babu M."/>
            <person name="Madera M."/>
            <person name="Marchionni L."/>
            <person name="Matsuda H."/>
            <person name="Matsuzawa S."/>
            <person name="Miki H."/>
            <person name="Mignone F."/>
            <person name="Miyake S."/>
            <person name="Morris K."/>
            <person name="Mottagui-Tabar S."/>
            <person name="Mulder N."/>
            <person name="Nakano N."/>
            <person name="Nakauchi H."/>
            <person name="Ng P."/>
            <person name="Nilsson R."/>
            <person name="Nishiguchi S."/>
            <person name="Nishikawa S."/>
            <person name="Nori F."/>
            <person name="Ohara O."/>
            <person name="Okazaki Y."/>
            <person name="Orlando V."/>
            <person name="Pang K.C."/>
            <person name="Pavan W.J."/>
            <person name="Pavesi G."/>
            <person name="Pesole G."/>
            <person name="Petrovsky N."/>
            <person name="Piazza S."/>
            <person name="Reed J."/>
            <person name="Reid J.F."/>
            <person name="Ring B.Z."/>
            <person name="Ringwald M."/>
            <person name="Rost B."/>
            <person name="Ruan Y."/>
            <person name="Salzberg S.L."/>
            <person name="Sandelin A."/>
            <person name="Schneider C."/>
            <person name="Schoenbach C."/>
            <person name="Sekiguchi K."/>
            <person name="Semple C.A."/>
            <person name="Seno S."/>
            <person name="Sessa L."/>
            <person name="Sheng Y."/>
            <person name="Shibata Y."/>
            <person name="Shimada H."/>
            <person name="Shimada K."/>
            <person name="Silva D."/>
            <person name="Sinclair B."/>
            <person name="Sperling S."/>
            <person name="Stupka E."/>
            <person name="Sugiura K."/>
            <person name="Sultana R."/>
            <person name="Takenaka Y."/>
            <person name="Taki K."/>
            <person name="Tammoja K."/>
            <person name="Tan S.L."/>
            <person name="Tang S."/>
            <person name="Taylor M.S."/>
            <person name="Tegner J."/>
            <person name="Teichmann S.A."/>
            <person name="Ueda H.R."/>
            <person name="van Nimwegen E."/>
            <person name="Verardo R."/>
            <person name="Wei C.L."/>
            <person name="Yagi K."/>
            <person name="Yamanishi H."/>
            <person name="Zabarovsky E."/>
            <person name="Zhu S."/>
            <person name="Zimmer A."/>
            <person name="Hide W."/>
            <person name="Bult C."/>
            <person name="Grimmond S.M."/>
            <person name="Teasdale R.D."/>
            <person name="Liu E.T."/>
            <person name="Brusic V."/>
            <person name="Quackenbush J."/>
            <person name="Wahlestedt C."/>
            <person name="Mattick J.S."/>
            <person name="Hume D.A."/>
            <person name="Kai C."/>
            <person name="Sasaki D."/>
            <person name="Tomaru Y."/>
            <person name="Fukuda S."/>
            <person name="Kanamori-Katayama M."/>
            <person name="Suzuki M."/>
            <person name="Aoki J."/>
            <person name="Arakawa T."/>
            <person name="Iida J."/>
            <person name="Imamura K."/>
            <person name="Itoh M."/>
            <person name="Kato T."/>
            <person name="Kawaji H."/>
            <person name="Kawagashira N."/>
            <person name="Kawashima T."/>
            <person name="Kojima M."/>
            <person name="Kondo S."/>
            <person name="Konno H."/>
            <person name="Nakano K."/>
            <person name="Ninomiya N."/>
            <person name="Nishio T."/>
            <person name="Okada M."/>
            <person name="Plessy C."/>
            <person name="Shibata K."/>
            <person name="Shiraki T."/>
            <person name="Suzuki S."/>
            <person name="Tagami M."/>
            <person name="Waki K."/>
            <person name="Watahiki A."/>
            <person name="Okamura-Oho Y."/>
            <person name="Suzuki H."/>
            <person name="Kawai J."/>
            <person name="Hayashizaki Y."/>
        </authorList>
    </citation>
    <scope>NUCLEOTIDE SEQUENCE [LARGE SCALE MRNA]</scope>
    <source>
        <strain>C57BL/6J</strain>
        <tissue>Heart</tissue>
        <tissue>Thymus</tissue>
    </source>
</reference>
<reference key="3">
    <citation type="journal article" date="2004" name="Genome Res.">
        <title>The status, quality, and expansion of the NIH full-length cDNA project: the Mammalian Gene Collection (MGC).</title>
        <authorList>
            <consortium name="The MGC Project Team"/>
        </authorList>
    </citation>
    <scope>NUCLEOTIDE SEQUENCE [LARGE SCALE MRNA]</scope>
    <source>
        <strain>C57BL/6J</strain>
        <tissue>Brain</tissue>
    </source>
</reference>
<reference key="4">
    <citation type="journal article" date="2004" name="Leukemia">
        <title>Expression and transcriptional regulation of functionally distinct Bmf isoforms in B-chronic lymphocytic leukemia cells.</title>
        <authorList>
            <person name="Morales A.A."/>
            <person name="Olsson A."/>
            <person name="Celsing F."/>
            <person name="Oesterborg A."/>
            <person name="Jondal M."/>
            <person name="Osorio L.M."/>
        </authorList>
    </citation>
    <scope>TISSUE SPECIFICITY</scope>
</reference>
<reference key="5">
    <citation type="journal article" date="2008" name="Structure">
        <title>Structural plasticity underpins promiscuous binding of the prosurvival protein A1.</title>
        <authorList>
            <person name="Smits C."/>
            <person name="Czabotar P.E."/>
            <person name="Hinds M.G."/>
            <person name="Day C.L."/>
        </authorList>
    </citation>
    <scope>X-RAY CRYSTALLOGRAPHY (1.9 ANGSTROMS) OF 126-152 IN COMPLEX WITH BCL2A1</scope>
</reference>
<dbReference type="EMBL" id="AY029253">
    <property type="protein sequence ID" value="AAK38747.1"/>
    <property type="molecule type" value="mRNA"/>
</dbReference>
<dbReference type="EMBL" id="AK084658">
    <property type="protein sequence ID" value="BAC39243.1"/>
    <property type="status" value="ALT_INIT"/>
    <property type="molecule type" value="mRNA"/>
</dbReference>
<dbReference type="EMBL" id="AK040622">
    <property type="protein sequence ID" value="BAC30649.1"/>
    <property type="molecule type" value="mRNA"/>
</dbReference>
<dbReference type="EMBL" id="BC079650">
    <property type="protein sequence ID" value="AAH79650.1"/>
    <property type="molecule type" value="mRNA"/>
</dbReference>
<dbReference type="CCDS" id="CCDS89538.1"/>
<dbReference type="RefSeq" id="NP_001318150.1">
    <property type="nucleotide sequence ID" value="NM_001331221.2"/>
</dbReference>
<dbReference type="RefSeq" id="NP_001411669.1">
    <property type="nucleotide sequence ID" value="NM_001424740.1"/>
</dbReference>
<dbReference type="RefSeq" id="NP_612186.2">
    <property type="nucleotide sequence ID" value="NM_138313.4"/>
</dbReference>
<dbReference type="RefSeq" id="XP_006498918.1">
    <property type="nucleotide sequence ID" value="XM_006498855.2"/>
</dbReference>
<dbReference type="RefSeq" id="XP_036014897.1">
    <property type="nucleotide sequence ID" value="XM_036159004.1"/>
</dbReference>
<dbReference type="PDB" id="2VOG">
    <property type="method" value="X-ray"/>
    <property type="resolution" value="1.90 A"/>
    <property type="chains" value="B=126-152"/>
</dbReference>
<dbReference type="PDBsum" id="2VOG"/>
<dbReference type="SMR" id="Q91ZE9"/>
<dbReference type="DIP" id="DIP-29806N"/>
<dbReference type="ELM" id="Q91ZE9"/>
<dbReference type="FunCoup" id="Q91ZE9">
    <property type="interactions" value="242"/>
</dbReference>
<dbReference type="IntAct" id="Q91ZE9">
    <property type="interactions" value="7"/>
</dbReference>
<dbReference type="MINT" id="Q91ZE9"/>
<dbReference type="STRING" id="10090.ENSMUSP00000087686"/>
<dbReference type="iPTMnet" id="Q91ZE9"/>
<dbReference type="PhosphoSitePlus" id="Q91ZE9"/>
<dbReference type="PaxDb" id="10090-ENSMUSP00000087686"/>
<dbReference type="ProteomicsDB" id="273746"/>
<dbReference type="Antibodypedia" id="1506">
    <property type="antibodies" value="475 antibodies from 39 providers"/>
</dbReference>
<dbReference type="DNASU" id="171543"/>
<dbReference type="Ensembl" id="ENSMUST00000125860.3">
    <property type="protein sequence ID" value="ENSMUSP00000159051.2"/>
    <property type="gene ID" value="ENSMUSG00000040093.17"/>
</dbReference>
<dbReference type="GeneID" id="171543"/>
<dbReference type="KEGG" id="mmu:171543"/>
<dbReference type="UCSC" id="uc008lsb.1">
    <property type="organism name" value="mouse"/>
</dbReference>
<dbReference type="AGR" id="MGI:2176433"/>
<dbReference type="CTD" id="90427"/>
<dbReference type="MGI" id="MGI:2176433">
    <property type="gene designation" value="Bmf"/>
</dbReference>
<dbReference type="VEuPathDB" id="HostDB:ENSMUSG00000040093"/>
<dbReference type="eggNOG" id="ENOG502S0P3">
    <property type="taxonomic scope" value="Eukaryota"/>
</dbReference>
<dbReference type="GeneTree" id="ENSGT00390000017896"/>
<dbReference type="InParanoid" id="Q91ZE9"/>
<dbReference type="OrthoDB" id="9934797at2759"/>
<dbReference type="Reactome" id="R-MMU-111453">
    <property type="pathway name" value="BH3-only proteins associate with and inactivate anti-apoptotic BCL-2 members"/>
</dbReference>
<dbReference type="Reactome" id="R-MMU-139910">
    <property type="pathway name" value="Activation of BMF and translocation to mitochondria"/>
</dbReference>
<dbReference type="BioGRID-ORCS" id="171543">
    <property type="hits" value="0 hits in 76 CRISPR screens"/>
</dbReference>
<dbReference type="ChiTaRS" id="Bmf">
    <property type="organism name" value="mouse"/>
</dbReference>
<dbReference type="EvolutionaryTrace" id="Q91ZE9"/>
<dbReference type="PRO" id="PR:Q91ZE9"/>
<dbReference type="Proteomes" id="UP000000589">
    <property type="component" value="Chromosome 2"/>
</dbReference>
<dbReference type="RNAct" id="Q91ZE9">
    <property type="molecule type" value="protein"/>
</dbReference>
<dbReference type="Bgee" id="ENSMUSG00000040093">
    <property type="expression patterns" value="Expressed in external carotid artery and 179 other cell types or tissues"/>
</dbReference>
<dbReference type="ExpressionAtlas" id="Q91ZE9">
    <property type="expression patterns" value="baseline and differential"/>
</dbReference>
<dbReference type="GO" id="GO:0015629">
    <property type="term" value="C:actin cytoskeleton"/>
    <property type="evidence" value="ECO:0000314"/>
    <property type="project" value="MGI"/>
</dbReference>
<dbReference type="GO" id="GO:0005737">
    <property type="term" value="C:cytoplasm"/>
    <property type="evidence" value="ECO:0000314"/>
    <property type="project" value="MGI"/>
</dbReference>
<dbReference type="GO" id="GO:0016459">
    <property type="term" value="C:myosin complex"/>
    <property type="evidence" value="ECO:0000314"/>
    <property type="project" value="UniProtKB"/>
</dbReference>
<dbReference type="GO" id="GO:0043276">
    <property type="term" value="P:anoikis"/>
    <property type="evidence" value="ECO:0000266"/>
    <property type="project" value="MGI"/>
</dbReference>
<dbReference type="GO" id="GO:0009267">
    <property type="term" value="P:cellular response to starvation"/>
    <property type="evidence" value="ECO:0000315"/>
    <property type="project" value="CAFA"/>
</dbReference>
<dbReference type="GO" id="GO:0034644">
    <property type="term" value="P:cellular response to UV"/>
    <property type="evidence" value="ECO:0000314"/>
    <property type="project" value="CAFA"/>
</dbReference>
<dbReference type="GO" id="GO:2001234">
    <property type="term" value="P:negative regulation of apoptotic signaling pathway"/>
    <property type="evidence" value="ECO:0000315"/>
    <property type="project" value="MGI"/>
</dbReference>
<dbReference type="GO" id="GO:1904093">
    <property type="term" value="P:negative regulation of autophagic cell death"/>
    <property type="evidence" value="ECO:0000315"/>
    <property type="project" value="CAFA"/>
</dbReference>
<dbReference type="GO" id="GO:0010507">
    <property type="term" value="P:negative regulation of autophagy"/>
    <property type="evidence" value="ECO:0000315"/>
    <property type="project" value="CAFA"/>
</dbReference>
<dbReference type="GO" id="GO:0043065">
    <property type="term" value="P:positive regulation of apoptotic process"/>
    <property type="evidence" value="ECO:0000314"/>
    <property type="project" value="MGI"/>
</dbReference>
<dbReference type="GO" id="GO:2001235">
    <property type="term" value="P:positive regulation of apoptotic signaling pathway"/>
    <property type="evidence" value="ECO:0000314"/>
    <property type="project" value="MGI"/>
</dbReference>
<dbReference type="GO" id="GO:0031334">
    <property type="term" value="P:positive regulation of protein-containing complex assembly"/>
    <property type="evidence" value="ECO:0000314"/>
    <property type="project" value="BHF-UCL"/>
</dbReference>
<dbReference type="GO" id="GO:0090200">
    <property type="term" value="P:positive regulation of release of cytochrome c from mitochondria"/>
    <property type="evidence" value="ECO:0000316"/>
    <property type="project" value="BHF-UCL"/>
</dbReference>
<dbReference type="DisProt" id="DP00645"/>
<dbReference type="InterPro" id="IPR028192">
    <property type="entry name" value="BMF"/>
</dbReference>
<dbReference type="PANTHER" id="PTHR32014">
    <property type="entry name" value="BCL-2-MODIFYING FACTOR"/>
    <property type="match status" value="1"/>
</dbReference>
<dbReference type="PANTHER" id="PTHR32014:SF2">
    <property type="entry name" value="BCL-2-MODIFYING FACTOR"/>
    <property type="match status" value="1"/>
</dbReference>
<dbReference type="Pfam" id="PF15185">
    <property type="entry name" value="BMF"/>
    <property type="match status" value="1"/>
</dbReference>
<comment type="function">
    <text>May play a role in apoptosis.</text>
</comment>
<comment type="subunit">
    <text evidence="2 4">Interacts with MCL1, BCL2, BCL2L1/BCL-Xl, BCL2A1 and BCL2L2/BCL-w. Interacts with the myosin V actin motor complex through its binding to DLC2.</text>
</comment>
<comment type="interaction">
    <interactant intactId="EBI-708032">
        <id>Q91ZE9</id>
    </interactant>
    <interactant intactId="EBI-707754">
        <id>Q07440</id>
        <label>Bcl2a1</label>
    </interactant>
    <organismsDiffer>false</organismsDiffer>
    <experiments>2</experiments>
</comment>
<comment type="interaction">
    <interactant intactId="EBI-708032">
        <id>Q91ZE9</id>
    </interactant>
    <interactant intactId="EBI-77694">
        <id>P10415</id>
        <label>BCL2</label>
    </interactant>
    <organismsDiffer>true</organismsDiffer>
    <experiments>2</experiments>
</comment>
<comment type="interaction">
    <interactant intactId="EBI-708032">
        <id>Q91ZE9</id>
    </interactant>
    <interactant intactId="EBI-707714">
        <id>Q92843</id>
        <label>BCL2L2</label>
    </interactant>
    <organismsDiffer>true</organismsDiffer>
    <experiments>2</experiments>
</comment>
<comment type="tissue specificity">
    <text evidence="3">Widely expressed with an abundant expression in pancreas, liver kidney and hematopoietic tissues.</text>
</comment>
<comment type="similarity">
    <text evidence="5">Belongs to the Bcl-2 family.</text>
</comment>
<comment type="sequence caution" evidence="5">
    <conflict type="erroneous initiation">
        <sequence resource="EMBL-CDS" id="BAC39243"/>
    </conflict>
</comment>
<sequence length="185" mass="20682">MEPPQCVEELEDDVFQSEDGEPGTQPGGLLSADLFAQSQLDCPLSRLQLFPLTHCCGPGLRPISQEDKATQTLSPASPSQGVMLPCGVTEEPQRLFYGNAGYRLPLPASFPAGSPLGEQPPEGQFLQHRAEVQIARKLQCIADQFHRLHTQQHQQNRDRAWWQVFLFLQNLALNRQENREGVGPW</sequence>
<gene>
    <name type="primary">Bmf</name>
</gene>
<keyword id="KW-0002">3D-structure</keyword>
<keyword id="KW-0053">Apoptosis</keyword>
<keyword id="KW-1185">Reference proteome</keyword>
<accession>Q91ZE9</accession>
<accession>Q8BUK0</accession>
<name>BMF_MOUSE</name>
<protein>
    <recommendedName>
        <fullName>Bcl-2-modifying factor</fullName>
    </recommendedName>
</protein>